<feature type="chain" id="PRO_1000061357" description="Ureidoglycolate lyase">
    <location>
        <begin position="1"/>
        <end position="169"/>
    </location>
</feature>
<evidence type="ECO:0000255" key="1">
    <source>
        <dbReference type="HAMAP-Rule" id="MF_00616"/>
    </source>
</evidence>
<accession>A6WWR5</accession>
<proteinExistence type="inferred from homology"/>
<protein>
    <recommendedName>
        <fullName evidence="1">Ureidoglycolate lyase</fullName>
        <ecNumber evidence="1">4.3.2.3</ecNumber>
    </recommendedName>
    <alternativeName>
        <fullName evidence="1">Ureidoglycolatase</fullName>
    </alternativeName>
</protein>
<organism>
    <name type="scientific">Brucella anthropi (strain ATCC 49188 / DSM 6882 / CCUG 24695 / JCM 21032 / LMG 3331 / NBRC 15819 / NCTC 12168 / Alc 37)</name>
    <name type="common">Ochrobactrum anthropi</name>
    <dbReference type="NCBI Taxonomy" id="439375"/>
    <lineage>
        <taxon>Bacteria</taxon>
        <taxon>Pseudomonadati</taxon>
        <taxon>Pseudomonadota</taxon>
        <taxon>Alphaproteobacteria</taxon>
        <taxon>Hyphomicrobiales</taxon>
        <taxon>Brucellaceae</taxon>
        <taxon>Brucella/Ochrobactrum group</taxon>
        <taxon>Brucella</taxon>
    </lineage>
</organism>
<reference key="1">
    <citation type="journal article" date="2011" name="J. Bacteriol.">
        <title>Genome of Ochrobactrum anthropi ATCC 49188 T, a versatile opportunistic pathogen and symbiont of several eukaryotic hosts.</title>
        <authorList>
            <person name="Chain P.S."/>
            <person name="Lang D.M."/>
            <person name="Comerci D.J."/>
            <person name="Malfatti S.A."/>
            <person name="Vergez L.M."/>
            <person name="Shin M."/>
            <person name="Ugalde R.A."/>
            <person name="Garcia E."/>
            <person name="Tolmasky M.E."/>
        </authorList>
    </citation>
    <scope>NUCLEOTIDE SEQUENCE [LARGE SCALE GENOMIC DNA]</scope>
    <source>
        <strain>ATCC 49188 / DSM 6882 / CCUG 24695 / JCM 21032 / LMG 3331 / NBRC 15819 / NCTC 12168 / Alc 37</strain>
    </source>
</reference>
<comment type="function">
    <text evidence="1">Catalyzes the catabolism of the allantoin degradation intermediate (S)-ureidoglycolate, generating urea and glyoxylate. Involved in the utilization of allantoin as nitrogen source.</text>
</comment>
<comment type="catalytic activity">
    <reaction evidence="1">
        <text>(S)-ureidoglycolate = urea + glyoxylate</text>
        <dbReference type="Rhea" id="RHEA:11304"/>
        <dbReference type="ChEBI" id="CHEBI:16199"/>
        <dbReference type="ChEBI" id="CHEBI:36655"/>
        <dbReference type="ChEBI" id="CHEBI:57296"/>
        <dbReference type="EC" id="4.3.2.3"/>
    </reaction>
</comment>
<comment type="cofactor">
    <cofactor evidence="1">
        <name>Ni(2+)</name>
        <dbReference type="ChEBI" id="CHEBI:49786"/>
    </cofactor>
</comment>
<comment type="pathway">
    <text evidence="1">Nitrogen metabolism; (S)-allantoin degradation.</text>
</comment>
<comment type="subunit">
    <text evidence="1">Homodimer.</text>
</comment>
<comment type="similarity">
    <text evidence="1">Belongs to the ureidoglycolate lyase family.</text>
</comment>
<dbReference type="EC" id="4.3.2.3" evidence="1"/>
<dbReference type="EMBL" id="CP000758">
    <property type="protein sequence ID" value="ABS13419.1"/>
    <property type="molecule type" value="Genomic_DNA"/>
</dbReference>
<dbReference type="RefSeq" id="WP_012090949.1">
    <property type="nucleotide sequence ID" value="NC_009667.1"/>
</dbReference>
<dbReference type="SMR" id="A6WWR5"/>
<dbReference type="STRING" id="439375.Oant_0694"/>
<dbReference type="KEGG" id="oan:Oant_0694"/>
<dbReference type="PATRIC" id="fig|439375.7.peg.730"/>
<dbReference type="eggNOG" id="COG3194">
    <property type="taxonomic scope" value="Bacteria"/>
</dbReference>
<dbReference type="HOGENOM" id="CLU_070848_1_0_5"/>
<dbReference type="PhylomeDB" id="A6WWR5"/>
<dbReference type="UniPathway" id="UPA00395"/>
<dbReference type="Proteomes" id="UP000002301">
    <property type="component" value="Chromosome 1"/>
</dbReference>
<dbReference type="GO" id="GO:0004848">
    <property type="term" value="F:ureidoglycolate hydrolase activity"/>
    <property type="evidence" value="ECO:0007669"/>
    <property type="project" value="InterPro"/>
</dbReference>
<dbReference type="GO" id="GO:0050385">
    <property type="term" value="F:ureidoglycolate lyase activity"/>
    <property type="evidence" value="ECO:0007669"/>
    <property type="project" value="UniProtKB-UniRule"/>
</dbReference>
<dbReference type="GO" id="GO:0000256">
    <property type="term" value="P:allantoin catabolic process"/>
    <property type="evidence" value="ECO:0007669"/>
    <property type="project" value="UniProtKB-UniRule"/>
</dbReference>
<dbReference type="GO" id="GO:0006145">
    <property type="term" value="P:purine nucleobase catabolic process"/>
    <property type="evidence" value="ECO:0007669"/>
    <property type="project" value="UniProtKB-UniRule"/>
</dbReference>
<dbReference type="CDD" id="cd20298">
    <property type="entry name" value="cupin_UAH"/>
    <property type="match status" value="1"/>
</dbReference>
<dbReference type="Gene3D" id="2.60.120.480">
    <property type="entry name" value="Ureidoglycolate hydrolase"/>
    <property type="match status" value="1"/>
</dbReference>
<dbReference type="HAMAP" id="MF_00616">
    <property type="entry name" value="Ureidogly_lyase"/>
    <property type="match status" value="1"/>
</dbReference>
<dbReference type="InterPro" id="IPR011051">
    <property type="entry name" value="RmlC_Cupin_sf"/>
</dbReference>
<dbReference type="InterPro" id="IPR047233">
    <property type="entry name" value="UAH_cupin"/>
</dbReference>
<dbReference type="InterPro" id="IPR007247">
    <property type="entry name" value="Ureidogly_lyase"/>
</dbReference>
<dbReference type="InterPro" id="IPR023525">
    <property type="entry name" value="Ureidogly_lyase_bac"/>
</dbReference>
<dbReference type="InterPro" id="IPR024060">
    <property type="entry name" value="Ureidoglycolate_lyase_dom_sf"/>
</dbReference>
<dbReference type="NCBIfam" id="NF002953">
    <property type="entry name" value="PRK03606.2-4"/>
    <property type="match status" value="1"/>
</dbReference>
<dbReference type="NCBIfam" id="NF009932">
    <property type="entry name" value="PRK13395.1"/>
    <property type="match status" value="1"/>
</dbReference>
<dbReference type="PANTHER" id="PTHR21221">
    <property type="entry name" value="UREIDOGLYCOLATE HYDROLASE"/>
    <property type="match status" value="1"/>
</dbReference>
<dbReference type="PANTHER" id="PTHR21221:SF1">
    <property type="entry name" value="UREIDOGLYCOLATE LYASE"/>
    <property type="match status" value="1"/>
</dbReference>
<dbReference type="Pfam" id="PF04115">
    <property type="entry name" value="Ureidogly_lyase"/>
    <property type="match status" value="1"/>
</dbReference>
<dbReference type="PIRSF" id="PIRSF017306">
    <property type="entry name" value="Ureidogly_hydro"/>
    <property type="match status" value="1"/>
</dbReference>
<dbReference type="SUPFAM" id="SSF51182">
    <property type="entry name" value="RmlC-like cupins"/>
    <property type="match status" value="1"/>
</dbReference>
<sequence>MHVETLVIEPLTKEAFAPFGDVIETEGAELRLINNGTTERYHDLARVEAAGTEARVLVNIFRGQSFEAPIDIVMMERHPFGSQAFIPLNGRPFLVVVAEDDGGKPARLRVFLAHGNQGVNYLRNVWHHPLLALEQKSDFLIVDRAGKEDNLEEFFFSDTTYRIETTKPA</sequence>
<gene>
    <name evidence="1" type="primary">allA</name>
    <name type="ordered locus">Oant_0694</name>
</gene>
<name>ALLA_BRUA4</name>
<keyword id="KW-0456">Lyase</keyword>
<keyword id="KW-0659">Purine metabolism</keyword>
<keyword id="KW-1185">Reference proteome</keyword>